<feature type="chain" id="PRO_0000014461" description="Translation initiation factor IF-2">
    <location>
        <begin position="1"/>
        <end position="716"/>
    </location>
</feature>
<feature type="domain" description="tr-type G">
    <location>
        <begin position="217"/>
        <end position="386"/>
    </location>
</feature>
<feature type="region of interest" description="Disordered" evidence="2">
    <location>
        <begin position="50"/>
        <end position="136"/>
    </location>
</feature>
<feature type="region of interest" description="G1" evidence="1">
    <location>
        <begin position="226"/>
        <end position="233"/>
    </location>
</feature>
<feature type="region of interest" description="G2" evidence="1">
    <location>
        <begin position="251"/>
        <end position="255"/>
    </location>
</feature>
<feature type="region of interest" description="G3" evidence="1">
    <location>
        <begin position="272"/>
        <end position="275"/>
    </location>
</feature>
<feature type="region of interest" description="G4" evidence="1">
    <location>
        <begin position="326"/>
        <end position="329"/>
    </location>
</feature>
<feature type="region of interest" description="G5" evidence="1">
    <location>
        <begin position="362"/>
        <end position="364"/>
    </location>
</feature>
<feature type="compositionally biased region" description="Polar residues" evidence="2">
    <location>
        <begin position="62"/>
        <end position="84"/>
    </location>
</feature>
<feature type="compositionally biased region" description="Basic residues" evidence="2">
    <location>
        <begin position="101"/>
        <end position="113"/>
    </location>
</feature>
<feature type="compositionally biased region" description="Low complexity" evidence="2">
    <location>
        <begin position="114"/>
        <end position="126"/>
    </location>
</feature>
<feature type="binding site" evidence="1">
    <location>
        <begin position="226"/>
        <end position="233"/>
    </location>
    <ligand>
        <name>GTP</name>
        <dbReference type="ChEBI" id="CHEBI:37565"/>
    </ligand>
</feature>
<feature type="binding site" evidence="1">
    <location>
        <begin position="272"/>
        <end position="276"/>
    </location>
    <ligand>
        <name>GTP</name>
        <dbReference type="ChEBI" id="CHEBI:37565"/>
    </ligand>
</feature>
<feature type="binding site" evidence="1">
    <location>
        <begin position="326"/>
        <end position="329"/>
    </location>
    <ligand>
        <name>GTP</name>
        <dbReference type="ChEBI" id="CHEBI:37565"/>
    </ligand>
</feature>
<feature type="splice variant" id="VSP_018753" description="In isoform Beta." evidence="3">
    <location>
        <begin position="1"/>
        <end position="93"/>
    </location>
</feature>
<feature type="splice variant" id="VSP_018754" description="In isoform Beta." evidence="3">
    <original>V</original>
    <variation>M</variation>
    <location>
        <position position="94"/>
    </location>
</feature>
<feature type="sequence conflict" description="In Ref. 3; CAB13536." evidence="3" ref="3">
    <original>R</original>
    <variation>A</variation>
    <location>
        <position position="56"/>
    </location>
</feature>
<proteinExistence type="inferred from homology"/>
<protein>
    <recommendedName>
        <fullName>Translation initiation factor IF-2</fullName>
    </recommendedName>
</protein>
<reference key="1">
    <citation type="journal article" date="1990" name="J. Bacteriol.">
        <title>Isolation and molecular genetic characterization of the Bacillus subtilis gene (infB) encoding protein synthesis initiation factor 2.</title>
        <authorList>
            <person name="Shazand K."/>
            <person name="Tucker J."/>
            <person name="Chiang R."/>
            <person name="Stansmore K."/>
            <person name="Sperling-Petersen H.U."/>
            <person name="Grunberg-Manago M."/>
            <person name="Rabinowitz J.C."/>
            <person name="Leighton T."/>
        </authorList>
    </citation>
    <scope>NUCLEOTIDE SEQUENCE [GENOMIC DNA]</scope>
    <source>
        <strain>168</strain>
    </source>
</reference>
<reference key="2">
    <citation type="journal article" date="1993" name="J. Bacteriol.">
        <title>Similar organization of the nusA-infB operon in Bacillus subtilis and Escherichia coli.</title>
        <authorList>
            <person name="Shazand K."/>
            <person name="Tucker J."/>
            <person name="Grunberg-Manago M."/>
            <person name="Rabinowitz J.C."/>
            <person name="Leighton T."/>
        </authorList>
    </citation>
    <scope>NUCLEOTIDE SEQUENCE [GENOMIC DNA]</scope>
    <source>
        <strain>168</strain>
    </source>
</reference>
<reference key="3">
    <citation type="journal article" date="1997" name="Nature">
        <title>The complete genome sequence of the Gram-positive bacterium Bacillus subtilis.</title>
        <authorList>
            <person name="Kunst F."/>
            <person name="Ogasawara N."/>
            <person name="Moszer I."/>
            <person name="Albertini A.M."/>
            <person name="Alloni G."/>
            <person name="Azevedo V."/>
            <person name="Bertero M.G."/>
            <person name="Bessieres P."/>
            <person name="Bolotin A."/>
            <person name="Borchert S."/>
            <person name="Borriss R."/>
            <person name="Boursier L."/>
            <person name="Brans A."/>
            <person name="Braun M."/>
            <person name="Brignell S.C."/>
            <person name="Bron S."/>
            <person name="Brouillet S."/>
            <person name="Bruschi C.V."/>
            <person name="Caldwell B."/>
            <person name="Capuano V."/>
            <person name="Carter N.M."/>
            <person name="Choi S.-K."/>
            <person name="Codani J.-J."/>
            <person name="Connerton I.F."/>
            <person name="Cummings N.J."/>
            <person name="Daniel R.A."/>
            <person name="Denizot F."/>
            <person name="Devine K.M."/>
            <person name="Duesterhoeft A."/>
            <person name="Ehrlich S.D."/>
            <person name="Emmerson P.T."/>
            <person name="Entian K.-D."/>
            <person name="Errington J."/>
            <person name="Fabret C."/>
            <person name="Ferrari E."/>
            <person name="Foulger D."/>
            <person name="Fritz C."/>
            <person name="Fujita M."/>
            <person name="Fujita Y."/>
            <person name="Fuma S."/>
            <person name="Galizzi A."/>
            <person name="Galleron N."/>
            <person name="Ghim S.-Y."/>
            <person name="Glaser P."/>
            <person name="Goffeau A."/>
            <person name="Golightly E.J."/>
            <person name="Grandi G."/>
            <person name="Guiseppi G."/>
            <person name="Guy B.J."/>
            <person name="Haga K."/>
            <person name="Haiech J."/>
            <person name="Harwood C.R."/>
            <person name="Henaut A."/>
            <person name="Hilbert H."/>
            <person name="Holsappel S."/>
            <person name="Hosono S."/>
            <person name="Hullo M.-F."/>
            <person name="Itaya M."/>
            <person name="Jones L.-M."/>
            <person name="Joris B."/>
            <person name="Karamata D."/>
            <person name="Kasahara Y."/>
            <person name="Klaerr-Blanchard M."/>
            <person name="Klein C."/>
            <person name="Kobayashi Y."/>
            <person name="Koetter P."/>
            <person name="Koningstein G."/>
            <person name="Krogh S."/>
            <person name="Kumano M."/>
            <person name="Kurita K."/>
            <person name="Lapidus A."/>
            <person name="Lardinois S."/>
            <person name="Lauber J."/>
            <person name="Lazarevic V."/>
            <person name="Lee S.-M."/>
            <person name="Levine A."/>
            <person name="Liu H."/>
            <person name="Masuda S."/>
            <person name="Mauel C."/>
            <person name="Medigue C."/>
            <person name="Medina N."/>
            <person name="Mellado R.P."/>
            <person name="Mizuno M."/>
            <person name="Moestl D."/>
            <person name="Nakai S."/>
            <person name="Noback M."/>
            <person name="Noone D."/>
            <person name="O'Reilly M."/>
            <person name="Ogawa K."/>
            <person name="Ogiwara A."/>
            <person name="Oudega B."/>
            <person name="Park S.-H."/>
            <person name="Parro V."/>
            <person name="Pohl T.M."/>
            <person name="Portetelle D."/>
            <person name="Porwollik S."/>
            <person name="Prescott A.M."/>
            <person name="Presecan E."/>
            <person name="Pujic P."/>
            <person name="Purnelle B."/>
            <person name="Rapoport G."/>
            <person name="Rey M."/>
            <person name="Reynolds S."/>
            <person name="Rieger M."/>
            <person name="Rivolta C."/>
            <person name="Rocha E."/>
            <person name="Roche B."/>
            <person name="Rose M."/>
            <person name="Sadaie Y."/>
            <person name="Sato T."/>
            <person name="Scanlan E."/>
            <person name="Schleich S."/>
            <person name="Schroeter R."/>
            <person name="Scoffone F."/>
            <person name="Sekiguchi J."/>
            <person name="Sekowska A."/>
            <person name="Seror S.J."/>
            <person name="Serror P."/>
            <person name="Shin B.-S."/>
            <person name="Soldo B."/>
            <person name="Sorokin A."/>
            <person name="Tacconi E."/>
            <person name="Takagi T."/>
            <person name="Takahashi H."/>
            <person name="Takemaru K."/>
            <person name="Takeuchi M."/>
            <person name="Tamakoshi A."/>
            <person name="Tanaka T."/>
            <person name="Terpstra P."/>
            <person name="Tognoni A."/>
            <person name="Tosato V."/>
            <person name="Uchiyama S."/>
            <person name="Vandenbol M."/>
            <person name="Vannier F."/>
            <person name="Vassarotti A."/>
            <person name="Viari A."/>
            <person name="Wambutt R."/>
            <person name="Wedler E."/>
            <person name="Wedler H."/>
            <person name="Weitzenegger T."/>
            <person name="Winters P."/>
            <person name="Wipat A."/>
            <person name="Yamamoto H."/>
            <person name="Yamane K."/>
            <person name="Yasumoto K."/>
            <person name="Yata K."/>
            <person name="Yoshida K."/>
            <person name="Yoshikawa H.-F."/>
            <person name="Zumstein E."/>
            <person name="Yoshikawa H."/>
            <person name="Danchin A."/>
        </authorList>
    </citation>
    <scope>NUCLEOTIDE SEQUENCE [LARGE SCALE GENOMIC DNA]</scope>
    <source>
        <strain>168</strain>
    </source>
</reference>
<gene>
    <name type="primary">infB</name>
    <name type="ordered locus">BSU16630</name>
</gene>
<keyword id="KW-0024">Alternative initiation</keyword>
<keyword id="KW-0963">Cytoplasm</keyword>
<keyword id="KW-0342">GTP-binding</keyword>
<keyword id="KW-0396">Initiation factor</keyword>
<keyword id="KW-0547">Nucleotide-binding</keyword>
<keyword id="KW-0648">Protein biosynthesis</keyword>
<keyword id="KW-1185">Reference proteome</keyword>
<dbReference type="EMBL" id="M34836">
    <property type="protein sequence ID" value="AAA22673.1"/>
    <property type="molecule type" value="Genomic_DNA"/>
</dbReference>
<dbReference type="EMBL" id="Z18631">
    <property type="protein sequence ID" value="CAA79234.1"/>
    <property type="molecule type" value="Genomic_DNA"/>
</dbReference>
<dbReference type="EMBL" id="AL009126">
    <property type="protein sequence ID" value="CAB13536.1"/>
    <property type="molecule type" value="Genomic_DNA"/>
</dbReference>
<dbReference type="PIR" id="A35269">
    <property type="entry name" value="A35269"/>
</dbReference>
<dbReference type="RefSeq" id="NP_389545.1">
    <property type="nucleotide sequence ID" value="NC_000964.3"/>
</dbReference>
<dbReference type="SMR" id="P17889"/>
<dbReference type="FunCoup" id="P17889">
    <property type="interactions" value="696"/>
</dbReference>
<dbReference type="IntAct" id="P17889">
    <property type="interactions" value="1"/>
</dbReference>
<dbReference type="MINT" id="P17889"/>
<dbReference type="STRING" id="224308.BSU16630"/>
<dbReference type="jPOST" id="P17889"/>
<dbReference type="PaxDb" id="224308-BSU16630"/>
<dbReference type="EnsemblBacteria" id="CAB13536">
    <property type="protein sequence ID" value="CAB13536"/>
    <property type="gene ID" value="BSU_16630"/>
</dbReference>
<dbReference type="GeneID" id="939630"/>
<dbReference type="KEGG" id="bsu:BSU16630"/>
<dbReference type="PATRIC" id="fig|224308.43.peg.1758"/>
<dbReference type="eggNOG" id="COG0532">
    <property type="taxonomic scope" value="Bacteria"/>
</dbReference>
<dbReference type="InParanoid" id="P17889"/>
<dbReference type="OrthoDB" id="9811804at2"/>
<dbReference type="BioCyc" id="BSUB:BSU16630-MONOMER"/>
<dbReference type="Proteomes" id="UP000001570">
    <property type="component" value="Chromosome"/>
</dbReference>
<dbReference type="GO" id="GO:0005737">
    <property type="term" value="C:cytoplasm"/>
    <property type="evidence" value="ECO:0000318"/>
    <property type="project" value="GO_Central"/>
</dbReference>
<dbReference type="GO" id="GO:0005829">
    <property type="term" value="C:cytosol"/>
    <property type="evidence" value="ECO:0000318"/>
    <property type="project" value="GO_Central"/>
</dbReference>
<dbReference type="GO" id="GO:0005525">
    <property type="term" value="F:GTP binding"/>
    <property type="evidence" value="ECO:0007669"/>
    <property type="project" value="UniProtKB-KW"/>
</dbReference>
<dbReference type="GO" id="GO:0003924">
    <property type="term" value="F:GTPase activity"/>
    <property type="evidence" value="ECO:0007669"/>
    <property type="project" value="UniProtKB-UniRule"/>
</dbReference>
<dbReference type="GO" id="GO:0003743">
    <property type="term" value="F:translation initiation factor activity"/>
    <property type="evidence" value="ECO:0000318"/>
    <property type="project" value="GO_Central"/>
</dbReference>
<dbReference type="GO" id="GO:0006413">
    <property type="term" value="P:translational initiation"/>
    <property type="evidence" value="ECO:0000318"/>
    <property type="project" value="GO_Central"/>
</dbReference>
<dbReference type="CDD" id="cd01887">
    <property type="entry name" value="IF2_eIF5B"/>
    <property type="match status" value="1"/>
</dbReference>
<dbReference type="CDD" id="cd03702">
    <property type="entry name" value="IF2_mtIF2_II"/>
    <property type="match status" value="1"/>
</dbReference>
<dbReference type="CDD" id="cd03692">
    <property type="entry name" value="mtIF2_IVc"/>
    <property type="match status" value="1"/>
</dbReference>
<dbReference type="FunFam" id="2.40.30.10:FF:000007">
    <property type="entry name" value="Translation initiation factor IF-2"/>
    <property type="match status" value="1"/>
</dbReference>
<dbReference type="FunFam" id="2.40.30.10:FF:000008">
    <property type="entry name" value="Translation initiation factor IF-2"/>
    <property type="match status" value="1"/>
</dbReference>
<dbReference type="FunFam" id="3.40.50.10050:FF:000001">
    <property type="entry name" value="Translation initiation factor IF-2"/>
    <property type="match status" value="1"/>
</dbReference>
<dbReference type="FunFam" id="3.40.50.300:FF:000019">
    <property type="entry name" value="Translation initiation factor IF-2"/>
    <property type="match status" value="1"/>
</dbReference>
<dbReference type="Gene3D" id="1.10.10.2480">
    <property type="match status" value="1"/>
</dbReference>
<dbReference type="Gene3D" id="3.40.50.300">
    <property type="entry name" value="P-loop containing nucleotide triphosphate hydrolases"/>
    <property type="match status" value="1"/>
</dbReference>
<dbReference type="Gene3D" id="2.40.30.10">
    <property type="entry name" value="Translation factors"/>
    <property type="match status" value="2"/>
</dbReference>
<dbReference type="Gene3D" id="3.40.50.10050">
    <property type="entry name" value="Translation initiation factor IF- 2, domain 3"/>
    <property type="match status" value="1"/>
</dbReference>
<dbReference type="HAMAP" id="MF_00100_B">
    <property type="entry name" value="IF_2_B"/>
    <property type="match status" value="1"/>
</dbReference>
<dbReference type="InterPro" id="IPR053905">
    <property type="entry name" value="EF-G-like_DII"/>
</dbReference>
<dbReference type="InterPro" id="IPR004161">
    <property type="entry name" value="EFTu-like_2"/>
</dbReference>
<dbReference type="InterPro" id="IPR044145">
    <property type="entry name" value="IF2_II"/>
</dbReference>
<dbReference type="InterPro" id="IPR006847">
    <property type="entry name" value="IF2_N"/>
</dbReference>
<dbReference type="InterPro" id="IPR027417">
    <property type="entry name" value="P-loop_NTPase"/>
</dbReference>
<dbReference type="InterPro" id="IPR005225">
    <property type="entry name" value="Small_GTP-bd"/>
</dbReference>
<dbReference type="InterPro" id="IPR000795">
    <property type="entry name" value="T_Tr_GTP-bd_dom"/>
</dbReference>
<dbReference type="InterPro" id="IPR000178">
    <property type="entry name" value="TF_IF2_bacterial-like"/>
</dbReference>
<dbReference type="InterPro" id="IPR015760">
    <property type="entry name" value="TIF_IF2"/>
</dbReference>
<dbReference type="InterPro" id="IPR023115">
    <property type="entry name" value="TIF_IF2_dom3"/>
</dbReference>
<dbReference type="InterPro" id="IPR036925">
    <property type="entry name" value="TIF_IF2_dom3_sf"/>
</dbReference>
<dbReference type="InterPro" id="IPR009000">
    <property type="entry name" value="Transl_B-barrel_sf"/>
</dbReference>
<dbReference type="NCBIfam" id="TIGR00487">
    <property type="entry name" value="IF-2"/>
    <property type="match status" value="1"/>
</dbReference>
<dbReference type="NCBIfam" id="TIGR00231">
    <property type="entry name" value="small_GTP"/>
    <property type="match status" value="1"/>
</dbReference>
<dbReference type="PANTHER" id="PTHR43381:SF5">
    <property type="entry name" value="TR-TYPE G DOMAIN-CONTAINING PROTEIN"/>
    <property type="match status" value="1"/>
</dbReference>
<dbReference type="PANTHER" id="PTHR43381">
    <property type="entry name" value="TRANSLATION INITIATION FACTOR IF-2-RELATED"/>
    <property type="match status" value="1"/>
</dbReference>
<dbReference type="Pfam" id="PF22042">
    <property type="entry name" value="EF-G_D2"/>
    <property type="match status" value="1"/>
</dbReference>
<dbReference type="Pfam" id="PF00009">
    <property type="entry name" value="GTP_EFTU"/>
    <property type="match status" value="1"/>
</dbReference>
<dbReference type="Pfam" id="PF03144">
    <property type="entry name" value="GTP_EFTU_D2"/>
    <property type="match status" value="1"/>
</dbReference>
<dbReference type="Pfam" id="PF11987">
    <property type="entry name" value="IF-2"/>
    <property type="match status" value="1"/>
</dbReference>
<dbReference type="Pfam" id="PF04760">
    <property type="entry name" value="IF2_N"/>
    <property type="match status" value="2"/>
</dbReference>
<dbReference type="SUPFAM" id="SSF52156">
    <property type="entry name" value="Initiation factor IF2/eIF5b, domain 3"/>
    <property type="match status" value="1"/>
</dbReference>
<dbReference type="SUPFAM" id="SSF52540">
    <property type="entry name" value="P-loop containing nucleoside triphosphate hydrolases"/>
    <property type="match status" value="1"/>
</dbReference>
<dbReference type="SUPFAM" id="SSF50447">
    <property type="entry name" value="Translation proteins"/>
    <property type="match status" value="2"/>
</dbReference>
<dbReference type="PROSITE" id="PS51722">
    <property type="entry name" value="G_TR_2"/>
    <property type="match status" value="1"/>
</dbReference>
<dbReference type="PROSITE" id="PS01176">
    <property type="entry name" value="IF2"/>
    <property type="match status" value="1"/>
</dbReference>
<evidence type="ECO:0000250" key="1"/>
<evidence type="ECO:0000256" key="2">
    <source>
        <dbReference type="SAM" id="MobiDB-lite"/>
    </source>
</evidence>
<evidence type="ECO:0000305" key="3"/>
<accession>P17889</accession>
<accession>O31757</accession>
<comment type="function">
    <text>One of the essential components for the initiation of protein synthesis. Protects formylmethionyl-tRNA from spontaneous hydrolysis and promotes its binding to the 30S ribosomal subunits. Also involved in the hydrolysis of GTP during the formation of the 70S ribosomal complex.</text>
</comment>
<comment type="subcellular location">
    <subcellularLocation>
        <location>Cytoplasm</location>
    </subcellularLocation>
</comment>
<comment type="alternative products">
    <event type="alternative initiation"/>
    <isoform>
        <id>P17889-1</id>
        <name>Alpha</name>
        <sequence type="displayed"/>
    </isoform>
    <isoform>
        <id>P17889-2</id>
        <name>Beta</name>
        <sequence type="described" ref="VSP_018753 VSP_018754"/>
    </isoform>
</comment>
<comment type="miscellaneous">
    <molecule>Isoform Beta</molecule>
    <text evidence="3">The alternative initiation site Met-94 is uncertain.</text>
</comment>
<comment type="similarity">
    <text evidence="3">Belongs to the TRAFAC class translation factor GTPase superfamily. Classic translation factor GTPase family. IF-2 subfamily.</text>
</comment>
<name>IF2_BACSU</name>
<sequence length="716" mass="78622">MAKMRVYEYAKALNVSSKEILTALKNMDLEVNNHMAMLEEKAIKKLDAKYKKGGARAKSQKPAETNKNKQPQGVNQQSAGNQPNKIRDGKKNDVQNNQFNKNKKNNNNKKNKRNNNNNKNQHQQKPVKPKKELPEKITFSGTLTVGALAEELGKEPSELIKKLMLLGVMATINQELDKDTIELIASEYGVETEEVIVLEETELEKYEEPDNEEDLEIRPPVVTIMGHVDHGKTTLLDSIRKTKVVEGEAGGITQHIGAYQIEENGKKITFLDTPGHAAFTTMRARGAEVTDITILVVAADDGVMPQTVEAINHAKAAEVPIIVAVNKIDKESANPDRVMQELTEYGLVPEAWGGETIFVPLSALTGKGIDELVEMILLVSEVEELKANPNRQAKGTVIEAELDKGRGSVATLLVQTGTLHVGDPIVVGNTFGRVRAMVNDIGRRVKTAGPSTPVEITGLNDVPQAGDQFLVFKDEKTARSVGEARASKQLEEQRSDKAKLSLDDLFEQIKQGDVKDINLIVKADVQGSAEALTAALQKIEVEGVKVKIIHTGVGAITESDIILASASNAIVIGFNVRPDGNAKSTAEAENVDIRLHRIIYKVIDEIEAAMKGMLDPEYEEKVIGQVEVRQTFKVSKIGTIAGGYVTEGTITRDSGLRLIRDGVVIFEGEVDVLKRFKDDVKEVSQGYECGITIKKYNDIREGDILEAFVMQEIERT</sequence>
<organism>
    <name type="scientific">Bacillus subtilis (strain 168)</name>
    <dbReference type="NCBI Taxonomy" id="224308"/>
    <lineage>
        <taxon>Bacteria</taxon>
        <taxon>Bacillati</taxon>
        <taxon>Bacillota</taxon>
        <taxon>Bacilli</taxon>
        <taxon>Bacillales</taxon>
        <taxon>Bacillaceae</taxon>
        <taxon>Bacillus</taxon>
    </lineage>
</organism>